<sequence>MAADEELSGVWQARVVTLFPDAFPGVLGLSLTGKALQDGRWQLHTHDLRSFGVGKHRNVDDTPAGGGAGMVMRADVVGPAIEAAQRFARGRWPILYMSPRGRPFTQKMAKDLARCDGVTVLCGRFEGVDERVLEHFGVTEVSIGDYVLTGGEIAAQTVLDATVRLLPGVLGNAESTVEESHSNGLLEHPQYTRPAIWEGHAIPEVLMSGNHAEIAKWRAAQSHRLTQSRRPDLWAAKGAKE</sequence>
<proteinExistence type="inferred from homology"/>
<keyword id="KW-0963">Cytoplasm</keyword>
<keyword id="KW-0489">Methyltransferase</keyword>
<keyword id="KW-1185">Reference proteome</keyword>
<keyword id="KW-0949">S-adenosyl-L-methionine</keyword>
<keyword id="KW-0808">Transferase</keyword>
<keyword id="KW-0819">tRNA processing</keyword>
<gene>
    <name evidence="1" type="primary">trmD</name>
    <name type="ordered locus">RD1_1307</name>
</gene>
<reference key="1">
    <citation type="journal article" date="2007" name="J. Bacteriol.">
        <title>The complete genome sequence of Roseobacter denitrificans reveals a mixotrophic rather than photosynthetic metabolism.</title>
        <authorList>
            <person name="Swingley W.D."/>
            <person name="Sadekar S."/>
            <person name="Mastrian S.D."/>
            <person name="Matthies H.J."/>
            <person name="Hao J."/>
            <person name="Ramos H."/>
            <person name="Acharya C.R."/>
            <person name="Conrad A.L."/>
            <person name="Taylor H.L."/>
            <person name="Dejesa L.C."/>
            <person name="Shah M.K."/>
            <person name="O'Huallachain M.E."/>
            <person name="Lince M.T."/>
            <person name="Blankenship R.E."/>
            <person name="Beatty J.T."/>
            <person name="Touchman J.W."/>
        </authorList>
    </citation>
    <scope>NUCLEOTIDE SEQUENCE [LARGE SCALE GENOMIC DNA]</scope>
    <source>
        <strain>ATCC 33942 / OCh 114</strain>
    </source>
</reference>
<comment type="function">
    <text evidence="1">Specifically methylates guanosine-37 in various tRNAs.</text>
</comment>
<comment type="catalytic activity">
    <reaction evidence="1">
        <text>guanosine(37) in tRNA + S-adenosyl-L-methionine = N(1)-methylguanosine(37) in tRNA + S-adenosyl-L-homocysteine + H(+)</text>
        <dbReference type="Rhea" id="RHEA:36899"/>
        <dbReference type="Rhea" id="RHEA-COMP:10145"/>
        <dbReference type="Rhea" id="RHEA-COMP:10147"/>
        <dbReference type="ChEBI" id="CHEBI:15378"/>
        <dbReference type="ChEBI" id="CHEBI:57856"/>
        <dbReference type="ChEBI" id="CHEBI:59789"/>
        <dbReference type="ChEBI" id="CHEBI:73542"/>
        <dbReference type="ChEBI" id="CHEBI:74269"/>
        <dbReference type="EC" id="2.1.1.228"/>
    </reaction>
</comment>
<comment type="subunit">
    <text evidence="1">Homodimer.</text>
</comment>
<comment type="subcellular location">
    <subcellularLocation>
        <location evidence="1">Cytoplasm</location>
    </subcellularLocation>
</comment>
<comment type="similarity">
    <text evidence="1">Belongs to the RNA methyltransferase TrmD family.</text>
</comment>
<dbReference type="EC" id="2.1.1.228" evidence="1"/>
<dbReference type="EMBL" id="CP000362">
    <property type="protein sequence ID" value="ABG30952.1"/>
    <property type="molecule type" value="Genomic_DNA"/>
</dbReference>
<dbReference type="SMR" id="Q16AP1"/>
<dbReference type="STRING" id="375451.RD1_1307"/>
<dbReference type="KEGG" id="rde:RD1_1307"/>
<dbReference type="eggNOG" id="COG0336">
    <property type="taxonomic scope" value="Bacteria"/>
</dbReference>
<dbReference type="HOGENOM" id="CLU_047363_0_1_5"/>
<dbReference type="Proteomes" id="UP000007029">
    <property type="component" value="Chromosome"/>
</dbReference>
<dbReference type="GO" id="GO:0005829">
    <property type="term" value="C:cytosol"/>
    <property type="evidence" value="ECO:0007669"/>
    <property type="project" value="TreeGrafter"/>
</dbReference>
<dbReference type="GO" id="GO:0052906">
    <property type="term" value="F:tRNA (guanine(37)-N1)-methyltransferase activity"/>
    <property type="evidence" value="ECO:0007669"/>
    <property type="project" value="UniProtKB-UniRule"/>
</dbReference>
<dbReference type="GO" id="GO:0002939">
    <property type="term" value="P:tRNA N1-guanine methylation"/>
    <property type="evidence" value="ECO:0007669"/>
    <property type="project" value="TreeGrafter"/>
</dbReference>
<dbReference type="CDD" id="cd18080">
    <property type="entry name" value="TrmD-like"/>
    <property type="match status" value="1"/>
</dbReference>
<dbReference type="FunFam" id="3.40.1280.10:FF:000001">
    <property type="entry name" value="tRNA (guanine-N(1)-)-methyltransferase"/>
    <property type="match status" value="1"/>
</dbReference>
<dbReference type="Gene3D" id="3.40.1280.10">
    <property type="match status" value="1"/>
</dbReference>
<dbReference type="Gene3D" id="1.10.1270.20">
    <property type="entry name" value="tRNA(m1g37)methyltransferase, domain 2"/>
    <property type="match status" value="1"/>
</dbReference>
<dbReference type="HAMAP" id="MF_00605">
    <property type="entry name" value="TrmD"/>
    <property type="match status" value="1"/>
</dbReference>
<dbReference type="InterPro" id="IPR029028">
    <property type="entry name" value="Alpha/beta_knot_MTases"/>
</dbReference>
<dbReference type="InterPro" id="IPR023148">
    <property type="entry name" value="tRNA_m1G_MeTrfase_C_sf"/>
</dbReference>
<dbReference type="InterPro" id="IPR002649">
    <property type="entry name" value="tRNA_m1G_MeTrfase_TrmD"/>
</dbReference>
<dbReference type="InterPro" id="IPR029026">
    <property type="entry name" value="tRNA_m1G_MTases_N"/>
</dbReference>
<dbReference type="InterPro" id="IPR016009">
    <property type="entry name" value="tRNA_MeTrfase_TRMD/TRM10"/>
</dbReference>
<dbReference type="NCBIfam" id="NF000648">
    <property type="entry name" value="PRK00026.1"/>
    <property type="match status" value="1"/>
</dbReference>
<dbReference type="NCBIfam" id="TIGR00088">
    <property type="entry name" value="trmD"/>
    <property type="match status" value="1"/>
</dbReference>
<dbReference type="PANTHER" id="PTHR46417">
    <property type="entry name" value="TRNA (GUANINE-N(1)-)-METHYLTRANSFERASE"/>
    <property type="match status" value="1"/>
</dbReference>
<dbReference type="PANTHER" id="PTHR46417:SF1">
    <property type="entry name" value="TRNA (GUANINE-N(1)-)-METHYLTRANSFERASE"/>
    <property type="match status" value="1"/>
</dbReference>
<dbReference type="Pfam" id="PF01746">
    <property type="entry name" value="tRNA_m1G_MT"/>
    <property type="match status" value="1"/>
</dbReference>
<dbReference type="PIRSF" id="PIRSF000386">
    <property type="entry name" value="tRNA_mtase"/>
    <property type="match status" value="1"/>
</dbReference>
<dbReference type="SUPFAM" id="SSF75217">
    <property type="entry name" value="alpha/beta knot"/>
    <property type="match status" value="1"/>
</dbReference>
<accession>Q16AP1</accession>
<name>TRMD_ROSDO</name>
<organism>
    <name type="scientific">Roseobacter denitrificans (strain ATCC 33942 / OCh 114)</name>
    <name type="common">Erythrobacter sp. (strain OCh 114)</name>
    <name type="synonym">Roseobacter denitrificans</name>
    <dbReference type="NCBI Taxonomy" id="375451"/>
    <lineage>
        <taxon>Bacteria</taxon>
        <taxon>Pseudomonadati</taxon>
        <taxon>Pseudomonadota</taxon>
        <taxon>Alphaproteobacteria</taxon>
        <taxon>Rhodobacterales</taxon>
        <taxon>Roseobacteraceae</taxon>
        <taxon>Roseobacter</taxon>
    </lineage>
</organism>
<feature type="chain" id="PRO_0000257464" description="tRNA (guanine-N(1)-)-methyltransferase">
    <location>
        <begin position="1"/>
        <end position="241"/>
    </location>
</feature>
<feature type="binding site" evidence="1">
    <location>
        <position position="123"/>
    </location>
    <ligand>
        <name>S-adenosyl-L-methionine</name>
        <dbReference type="ChEBI" id="CHEBI:59789"/>
    </ligand>
</feature>
<feature type="binding site" evidence="1">
    <location>
        <begin position="143"/>
        <end position="148"/>
    </location>
    <ligand>
        <name>S-adenosyl-L-methionine</name>
        <dbReference type="ChEBI" id="CHEBI:59789"/>
    </ligand>
</feature>
<evidence type="ECO:0000255" key="1">
    <source>
        <dbReference type="HAMAP-Rule" id="MF_00605"/>
    </source>
</evidence>
<protein>
    <recommendedName>
        <fullName evidence="1">tRNA (guanine-N(1)-)-methyltransferase</fullName>
        <ecNumber evidence="1">2.1.1.228</ecNumber>
    </recommendedName>
    <alternativeName>
        <fullName evidence="1">M1G-methyltransferase</fullName>
    </alternativeName>
    <alternativeName>
        <fullName evidence="1">tRNA [GM37] methyltransferase</fullName>
    </alternativeName>
</protein>